<organism>
    <name type="scientific">Escherichia coli O139:H28 (strain E24377A / ETEC)</name>
    <dbReference type="NCBI Taxonomy" id="331111"/>
    <lineage>
        <taxon>Bacteria</taxon>
        <taxon>Pseudomonadati</taxon>
        <taxon>Pseudomonadota</taxon>
        <taxon>Gammaproteobacteria</taxon>
        <taxon>Enterobacterales</taxon>
        <taxon>Enterobacteriaceae</taxon>
        <taxon>Escherichia</taxon>
    </lineage>
</organism>
<feature type="chain" id="PRO_0000359297" description="5'-methylthioadenosine/S-adenosylhomocysteine nucleosidase">
    <location>
        <begin position="1"/>
        <end position="232"/>
    </location>
</feature>
<feature type="active site" description="Proton acceptor" evidence="1">
    <location>
        <position position="12"/>
    </location>
</feature>
<feature type="active site" description="Proton donor" evidence="1">
    <location>
        <position position="197"/>
    </location>
</feature>
<feature type="binding site" evidence="1">
    <location>
        <position position="78"/>
    </location>
    <ligand>
        <name>substrate</name>
    </ligand>
</feature>
<feature type="binding site" evidence="1">
    <location>
        <position position="152"/>
    </location>
    <ligand>
        <name>substrate</name>
    </ligand>
</feature>
<feature type="binding site" evidence="1">
    <location>
        <begin position="173"/>
        <end position="174"/>
    </location>
    <ligand>
        <name>substrate</name>
    </ligand>
</feature>
<reference key="1">
    <citation type="journal article" date="2008" name="J. Bacteriol.">
        <title>The pangenome structure of Escherichia coli: comparative genomic analysis of E. coli commensal and pathogenic isolates.</title>
        <authorList>
            <person name="Rasko D.A."/>
            <person name="Rosovitz M.J."/>
            <person name="Myers G.S.A."/>
            <person name="Mongodin E.F."/>
            <person name="Fricke W.F."/>
            <person name="Gajer P."/>
            <person name="Crabtree J."/>
            <person name="Sebaihia M."/>
            <person name="Thomson N.R."/>
            <person name="Chaudhuri R."/>
            <person name="Henderson I.R."/>
            <person name="Sperandio V."/>
            <person name="Ravel J."/>
        </authorList>
    </citation>
    <scope>NUCLEOTIDE SEQUENCE [LARGE SCALE GENOMIC DNA]</scope>
    <source>
        <strain>E24377A / ETEC</strain>
    </source>
</reference>
<name>MTNN_ECO24</name>
<sequence>MKIGIIGAMEEEVTLLRDKIENRQTISLGGCEIYTGQLNGTEVALLKSGIGKVAAALGATLLLEHCKPDVIINTGSAGGLAPTLKVGDIVVSDEARYHDADVTAFGYEYGQLPGCPAGFKADDKLIAAAEACIAELNLNAVRGLIVSGDAFINGSVGLAKIRHNFPQAIAVEMEATAIAHVCHNFNVPFVVVRAISDVADQQSHLSFDEFLAVAAKQSSLMVESLVQKLAHG</sequence>
<dbReference type="EC" id="3.2.2.9" evidence="1"/>
<dbReference type="EMBL" id="CP000800">
    <property type="protein sequence ID" value="ABV20698.1"/>
    <property type="molecule type" value="Genomic_DNA"/>
</dbReference>
<dbReference type="RefSeq" id="WP_000689844.1">
    <property type="nucleotide sequence ID" value="NC_009801.1"/>
</dbReference>
<dbReference type="SMR" id="A7ZHQ1"/>
<dbReference type="GeneID" id="93777267"/>
<dbReference type="KEGG" id="ecw:EcE24377A_0164"/>
<dbReference type="HOGENOM" id="CLU_031248_2_2_6"/>
<dbReference type="UniPathway" id="UPA00904">
    <property type="reaction ID" value="UER00871"/>
</dbReference>
<dbReference type="Proteomes" id="UP000001122">
    <property type="component" value="Chromosome"/>
</dbReference>
<dbReference type="GO" id="GO:0005829">
    <property type="term" value="C:cytosol"/>
    <property type="evidence" value="ECO:0007669"/>
    <property type="project" value="TreeGrafter"/>
</dbReference>
<dbReference type="GO" id="GO:0008782">
    <property type="term" value="F:adenosylhomocysteine nucleosidase activity"/>
    <property type="evidence" value="ECO:0007669"/>
    <property type="project" value="UniProtKB-UniRule"/>
</dbReference>
<dbReference type="GO" id="GO:0008930">
    <property type="term" value="F:methylthioadenosine nucleosidase activity"/>
    <property type="evidence" value="ECO:0007669"/>
    <property type="project" value="UniProtKB-UniRule"/>
</dbReference>
<dbReference type="GO" id="GO:0019509">
    <property type="term" value="P:L-methionine salvage from methylthioadenosine"/>
    <property type="evidence" value="ECO:0007669"/>
    <property type="project" value="UniProtKB-UniRule"/>
</dbReference>
<dbReference type="GO" id="GO:0019284">
    <property type="term" value="P:L-methionine salvage from S-adenosylmethionine"/>
    <property type="evidence" value="ECO:0007669"/>
    <property type="project" value="TreeGrafter"/>
</dbReference>
<dbReference type="GO" id="GO:0046124">
    <property type="term" value="P:purine deoxyribonucleoside catabolic process"/>
    <property type="evidence" value="ECO:0007669"/>
    <property type="project" value="UniProtKB-UniRule"/>
</dbReference>
<dbReference type="CDD" id="cd09008">
    <property type="entry name" value="MTAN"/>
    <property type="match status" value="1"/>
</dbReference>
<dbReference type="FunFam" id="3.40.50.1580:FF:000001">
    <property type="entry name" value="MTA/SAH nucleosidase family protein"/>
    <property type="match status" value="1"/>
</dbReference>
<dbReference type="Gene3D" id="3.40.50.1580">
    <property type="entry name" value="Nucleoside phosphorylase domain"/>
    <property type="match status" value="1"/>
</dbReference>
<dbReference type="HAMAP" id="MF_01684">
    <property type="entry name" value="Salvage_MtnN"/>
    <property type="match status" value="1"/>
</dbReference>
<dbReference type="InterPro" id="IPR010049">
    <property type="entry name" value="MTA_SAH_Nsdase"/>
</dbReference>
<dbReference type="InterPro" id="IPR000845">
    <property type="entry name" value="Nucleoside_phosphorylase_d"/>
</dbReference>
<dbReference type="InterPro" id="IPR035994">
    <property type="entry name" value="Nucleoside_phosphorylase_sf"/>
</dbReference>
<dbReference type="NCBIfam" id="TIGR01704">
    <property type="entry name" value="MTA_SAH-Nsdase"/>
    <property type="match status" value="1"/>
</dbReference>
<dbReference type="NCBIfam" id="NF004079">
    <property type="entry name" value="PRK05584.1"/>
    <property type="match status" value="1"/>
</dbReference>
<dbReference type="PANTHER" id="PTHR46832">
    <property type="entry name" value="5'-METHYLTHIOADENOSINE/S-ADENOSYLHOMOCYSTEINE NUCLEOSIDASE"/>
    <property type="match status" value="1"/>
</dbReference>
<dbReference type="PANTHER" id="PTHR46832:SF1">
    <property type="entry name" value="5'-METHYLTHIOADENOSINE_S-ADENOSYLHOMOCYSTEINE NUCLEOSIDASE"/>
    <property type="match status" value="1"/>
</dbReference>
<dbReference type="Pfam" id="PF01048">
    <property type="entry name" value="PNP_UDP_1"/>
    <property type="match status" value="1"/>
</dbReference>
<dbReference type="SUPFAM" id="SSF53167">
    <property type="entry name" value="Purine and uridine phosphorylases"/>
    <property type="match status" value="1"/>
</dbReference>
<comment type="function">
    <text evidence="1">Catalyzes the irreversible cleavage of the glycosidic bond in both 5'-methylthioadenosine (MTA) and S-adenosylhomocysteine (SAH/AdoHcy) to adenine and the corresponding thioribose, 5'-methylthioribose and S-ribosylhomocysteine, respectively. Also cleaves 5'-deoxyadenosine, a toxic by-product of radical S-adenosylmethionine (SAM) enzymes, into 5-deoxyribose and adenine. Thus, is required for in vivo function of the radical SAM enzymes biotin synthase and lipoic acid synthase, that are inhibited by 5'-deoxyadenosine accumulation.</text>
</comment>
<comment type="catalytic activity">
    <reaction evidence="1">
        <text>S-adenosyl-L-homocysteine + H2O = S-(5-deoxy-D-ribos-5-yl)-L-homocysteine + adenine</text>
        <dbReference type="Rhea" id="RHEA:17805"/>
        <dbReference type="ChEBI" id="CHEBI:15377"/>
        <dbReference type="ChEBI" id="CHEBI:16708"/>
        <dbReference type="ChEBI" id="CHEBI:57856"/>
        <dbReference type="ChEBI" id="CHEBI:58195"/>
        <dbReference type="EC" id="3.2.2.9"/>
    </reaction>
</comment>
<comment type="catalytic activity">
    <reaction evidence="1">
        <text>S-methyl-5'-thioadenosine + H2O = 5-(methylsulfanyl)-D-ribose + adenine</text>
        <dbReference type="Rhea" id="RHEA:13617"/>
        <dbReference type="ChEBI" id="CHEBI:15377"/>
        <dbReference type="ChEBI" id="CHEBI:16708"/>
        <dbReference type="ChEBI" id="CHEBI:17509"/>
        <dbReference type="ChEBI" id="CHEBI:78440"/>
        <dbReference type="EC" id="3.2.2.9"/>
    </reaction>
</comment>
<comment type="catalytic activity">
    <reaction evidence="1">
        <text>5'-deoxyadenosine + H2O = 5-deoxy-D-ribose + adenine</text>
        <dbReference type="Rhea" id="RHEA:29859"/>
        <dbReference type="ChEBI" id="CHEBI:15377"/>
        <dbReference type="ChEBI" id="CHEBI:16708"/>
        <dbReference type="ChEBI" id="CHEBI:17319"/>
        <dbReference type="ChEBI" id="CHEBI:149540"/>
        <dbReference type="EC" id="3.2.2.9"/>
    </reaction>
    <physiologicalReaction direction="left-to-right" evidence="1">
        <dbReference type="Rhea" id="RHEA:29860"/>
    </physiologicalReaction>
</comment>
<comment type="pathway">
    <text evidence="1">Amino-acid biosynthesis; L-methionine biosynthesis via salvage pathway; S-methyl-5-thio-alpha-D-ribose 1-phosphate from S-methyl-5'-thioadenosine (hydrolase route): step 1/2.</text>
</comment>
<comment type="subunit">
    <text evidence="1">Homodimer.</text>
</comment>
<comment type="similarity">
    <text evidence="1">Belongs to the PNP/UDP phosphorylase family. MtnN subfamily.</text>
</comment>
<protein>
    <recommendedName>
        <fullName evidence="1">5'-methylthioadenosine/S-adenosylhomocysteine nucleosidase</fullName>
        <shortName evidence="1">MTA/SAH nucleosidase</shortName>
        <shortName evidence="1">MTAN</shortName>
        <ecNumber evidence="1">3.2.2.9</ecNumber>
    </recommendedName>
    <alternativeName>
        <fullName evidence="1">5'-deoxyadenosine nucleosidase</fullName>
        <shortName evidence="1">DOA nucleosidase</shortName>
        <shortName evidence="1">dAdo nucleosidase</shortName>
    </alternativeName>
    <alternativeName>
        <fullName evidence="1">5'-methylthioadenosine nucleosidase</fullName>
        <shortName evidence="1">MTA nucleosidase</shortName>
    </alternativeName>
    <alternativeName>
        <fullName evidence="1">S-adenosylhomocysteine nucleosidase</fullName>
        <shortName evidence="1">AdoHcy nucleosidase</shortName>
        <shortName evidence="1">SAH nucleosidase</shortName>
        <shortName evidence="1">SRH nucleosidase</shortName>
    </alternativeName>
</protein>
<keyword id="KW-0028">Amino-acid biosynthesis</keyword>
<keyword id="KW-0378">Hydrolase</keyword>
<keyword id="KW-0486">Methionine biosynthesis</keyword>
<keyword id="KW-1185">Reference proteome</keyword>
<gene>
    <name evidence="1" type="primary">mtnN</name>
    <name type="ordered locus">EcE24377A_0164</name>
</gene>
<accession>A7ZHQ1</accession>
<proteinExistence type="inferred from homology"/>
<evidence type="ECO:0000255" key="1">
    <source>
        <dbReference type="HAMAP-Rule" id="MF_01684"/>
    </source>
</evidence>